<comment type="function">
    <text evidence="1">Catalyzes the specific phosphorylation of the 3-hydroxyl group of shikimic acid using ATP as a cosubstrate.</text>
</comment>
<comment type="catalytic activity">
    <reaction evidence="1">
        <text>shikimate + ATP = 3-phosphoshikimate + ADP + H(+)</text>
        <dbReference type="Rhea" id="RHEA:13121"/>
        <dbReference type="ChEBI" id="CHEBI:15378"/>
        <dbReference type="ChEBI" id="CHEBI:30616"/>
        <dbReference type="ChEBI" id="CHEBI:36208"/>
        <dbReference type="ChEBI" id="CHEBI:145989"/>
        <dbReference type="ChEBI" id="CHEBI:456216"/>
        <dbReference type="EC" id="2.7.1.71"/>
    </reaction>
</comment>
<comment type="cofactor">
    <cofactor evidence="1">
        <name>Mg(2+)</name>
        <dbReference type="ChEBI" id="CHEBI:18420"/>
    </cofactor>
    <text evidence="1">Binds 1 Mg(2+) ion per subunit.</text>
</comment>
<comment type="pathway">
    <text evidence="1">Metabolic intermediate biosynthesis; chorismate biosynthesis; chorismate from D-erythrose 4-phosphate and phosphoenolpyruvate: step 5/7.</text>
</comment>
<comment type="subunit">
    <text evidence="1">Monomer.</text>
</comment>
<comment type="subcellular location">
    <subcellularLocation>
        <location evidence="1">Cytoplasm</location>
    </subcellularLocation>
</comment>
<comment type="similarity">
    <text evidence="1">Belongs to the shikimate kinase family.</text>
</comment>
<comment type="sequence caution" evidence="2">
    <conflict type="erroneous initiation">
        <sequence resource="EMBL-CDS" id="AAF10352"/>
    </conflict>
</comment>
<reference key="1">
    <citation type="journal article" date="1999" name="Science">
        <title>Genome sequence of the radioresistant bacterium Deinococcus radiodurans R1.</title>
        <authorList>
            <person name="White O."/>
            <person name="Eisen J.A."/>
            <person name="Heidelberg J.F."/>
            <person name="Hickey E.K."/>
            <person name="Peterson J.D."/>
            <person name="Dodson R.J."/>
            <person name="Haft D.H."/>
            <person name="Gwinn M.L."/>
            <person name="Nelson W.C."/>
            <person name="Richardson D.L."/>
            <person name="Moffat K.S."/>
            <person name="Qin H."/>
            <person name="Jiang L."/>
            <person name="Pamphile W."/>
            <person name="Crosby M."/>
            <person name="Shen M."/>
            <person name="Vamathevan J.J."/>
            <person name="Lam P."/>
            <person name="McDonald L.A."/>
            <person name="Utterback T.R."/>
            <person name="Zalewski C."/>
            <person name="Makarova K.S."/>
            <person name="Aravind L."/>
            <person name="Daly M.J."/>
            <person name="Minton K.W."/>
            <person name="Fleischmann R.D."/>
            <person name="Ketchum K.A."/>
            <person name="Nelson K.E."/>
            <person name="Salzberg S.L."/>
            <person name="Smith H.O."/>
            <person name="Venter J.C."/>
            <person name="Fraser C.M."/>
        </authorList>
    </citation>
    <scope>NUCLEOTIDE SEQUENCE [LARGE SCALE GENOMIC DNA]</scope>
    <source>
        <strain>ATCC 13939 / DSM 20539 / JCM 16871 / CCUG 27074 / LMG 4051 / NBRC 15346 / NCIMB 9279 / VKM B-1422 / R1</strain>
    </source>
</reference>
<organism>
    <name type="scientific">Deinococcus radiodurans (strain ATCC 13939 / DSM 20539 / JCM 16871 / CCUG 27074 / LMG 4051 / NBRC 15346 / NCIMB 9279 / VKM B-1422 / R1)</name>
    <dbReference type="NCBI Taxonomy" id="243230"/>
    <lineage>
        <taxon>Bacteria</taxon>
        <taxon>Thermotogati</taxon>
        <taxon>Deinococcota</taxon>
        <taxon>Deinococci</taxon>
        <taxon>Deinococcales</taxon>
        <taxon>Deinococcaceae</taxon>
        <taxon>Deinococcus</taxon>
    </lineage>
</organism>
<sequence length="196" mass="22227">MFPSGLIERPANWVALAGFMGTGKSRIGWELSRALALHFVDTDKLITRVVGKSIPEVFAQEGEGYFRACEREVVQRVTRLDHAVISLGGGTFIHEENRRLLLSRGPVVVLWATPETVYQRTKHSDRPLLKVEDPLSRIRTLMNEREGVYRQGTIHVHSDGRPSEEIVEEVVERLWAWRDAQAAWAALPPDYDRATS</sequence>
<evidence type="ECO:0000255" key="1">
    <source>
        <dbReference type="HAMAP-Rule" id="MF_00109"/>
    </source>
</evidence>
<evidence type="ECO:0000305" key="2"/>
<protein>
    <recommendedName>
        <fullName evidence="1">Shikimate kinase</fullName>
        <shortName evidence="1">SK</shortName>
        <ecNumber evidence="1">2.7.1.71</ecNumber>
    </recommendedName>
</protein>
<dbReference type="EC" id="2.7.1.71" evidence="1"/>
<dbReference type="EMBL" id="AE000513">
    <property type="protein sequence ID" value="AAF10352.1"/>
    <property type="status" value="ALT_INIT"/>
    <property type="molecule type" value="Genomic_DNA"/>
</dbReference>
<dbReference type="PIR" id="A75478">
    <property type="entry name" value="A75478"/>
</dbReference>
<dbReference type="RefSeq" id="NP_294500.1">
    <property type="nucleotide sequence ID" value="NC_001263.1"/>
</dbReference>
<dbReference type="RefSeq" id="WP_010887422.1">
    <property type="nucleotide sequence ID" value="NZ_CP150840.1"/>
</dbReference>
<dbReference type="RefSeq" id="WP_034350371.1">
    <property type="nucleotide sequence ID" value="NC_001263.1"/>
</dbReference>
<dbReference type="SMR" id="Q9RW93"/>
<dbReference type="FunCoup" id="Q9RW93">
    <property type="interactions" value="387"/>
</dbReference>
<dbReference type="STRING" id="243230.DR_0776"/>
<dbReference type="PaxDb" id="243230-DR_0776"/>
<dbReference type="EnsemblBacteria" id="AAF10352">
    <property type="protein sequence ID" value="AAF10352"/>
    <property type="gene ID" value="DR_0776"/>
</dbReference>
<dbReference type="GeneID" id="69517021"/>
<dbReference type="KEGG" id="dra:DR_0776"/>
<dbReference type="PATRIC" id="fig|243230.17.peg.956"/>
<dbReference type="eggNOG" id="COG0703">
    <property type="taxonomic scope" value="Bacteria"/>
</dbReference>
<dbReference type="HOGENOM" id="CLU_057607_2_1_0"/>
<dbReference type="InParanoid" id="Q9RW93"/>
<dbReference type="OrthoDB" id="9800332at2"/>
<dbReference type="UniPathway" id="UPA00053">
    <property type="reaction ID" value="UER00088"/>
</dbReference>
<dbReference type="Proteomes" id="UP000002524">
    <property type="component" value="Chromosome 1"/>
</dbReference>
<dbReference type="GO" id="GO:0005829">
    <property type="term" value="C:cytosol"/>
    <property type="evidence" value="ECO:0000318"/>
    <property type="project" value="GO_Central"/>
</dbReference>
<dbReference type="GO" id="GO:0005524">
    <property type="term" value="F:ATP binding"/>
    <property type="evidence" value="ECO:0007669"/>
    <property type="project" value="UniProtKB-UniRule"/>
</dbReference>
<dbReference type="GO" id="GO:0000287">
    <property type="term" value="F:magnesium ion binding"/>
    <property type="evidence" value="ECO:0007669"/>
    <property type="project" value="UniProtKB-UniRule"/>
</dbReference>
<dbReference type="GO" id="GO:0004765">
    <property type="term" value="F:shikimate kinase activity"/>
    <property type="evidence" value="ECO:0000318"/>
    <property type="project" value="GO_Central"/>
</dbReference>
<dbReference type="GO" id="GO:0008652">
    <property type="term" value="P:amino acid biosynthetic process"/>
    <property type="evidence" value="ECO:0007669"/>
    <property type="project" value="UniProtKB-KW"/>
</dbReference>
<dbReference type="GO" id="GO:0009073">
    <property type="term" value="P:aromatic amino acid family biosynthetic process"/>
    <property type="evidence" value="ECO:0007669"/>
    <property type="project" value="UniProtKB-KW"/>
</dbReference>
<dbReference type="GO" id="GO:0009423">
    <property type="term" value="P:chorismate biosynthetic process"/>
    <property type="evidence" value="ECO:0007669"/>
    <property type="project" value="UniProtKB-UniRule"/>
</dbReference>
<dbReference type="CDD" id="cd00464">
    <property type="entry name" value="SK"/>
    <property type="match status" value="1"/>
</dbReference>
<dbReference type="FunFam" id="3.40.50.300:FF:004426">
    <property type="entry name" value="Shikimate kinase"/>
    <property type="match status" value="1"/>
</dbReference>
<dbReference type="Gene3D" id="3.40.50.300">
    <property type="entry name" value="P-loop containing nucleotide triphosphate hydrolases"/>
    <property type="match status" value="1"/>
</dbReference>
<dbReference type="HAMAP" id="MF_00109">
    <property type="entry name" value="Shikimate_kinase"/>
    <property type="match status" value="1"/>
</dbReference>
<dbReference type="InterPro" id="IPR027417">
    <property type="entry name" value="P-loop_NTPase"/>
</dbReference>
<dbReference type="InterPro" id="IPR031322">
    <property type="entry name" value="Shikimate/glucono_kinase"/>
</dbReference>
<dbReference type="InterPro" id="IPR000623">
    <property type="entry name" value="Shikimate_kinase/TSH1"/>
</dbReference>
<dbReference type="InterPro" id="IPR023000">
    <property type="entry name" value="Shikimate_kinase_CS"/>
</dbReference>
<dbReference type="NCBIfam" id="NF010554">
    <property type="entry name" value="PRK13948.1"/>
    <property type="match status" value="1"/>
</dbReference>
<dbReference type="PANTHER" id="PTHR21087">
    <property type="entry name" value="SHIKIMATE KINASE"/>
    <property type="match status" value="1"/>
</dbReference>
<dbReference type="PANTHER" id="PTHR21087:SF16">
    <property type="entry name" value="SHIKIMATE KINASE 1, CHLOROPLASTIC"/>
    <property type="match status" value="1"/>
</dbReference>
<dbReference type="Pfam" id="PF01202">
    <property type="entry name" value="SKI"/>
    <property type="match status" value="1"/>
</dbReference>
<dbReference type="PRINTS" id="PR01100">
    <property type="entry name" value="SHIKIMTKNASE"/>
</dbReference>
<dbReference type="SUPFAM" id="SSF52540">
    <property type="entry name" value="P-loop containing nucleoside triphosphate hydrolases"/>
    <property type="match status" value="1"/>
</dbReference>
<dbReference type="PROSITE" id="PS01128">
    <property type="entry name" value="SHIKIMATE_KINASE"/>
    <property type="match status" value="1"/>
</dbReference>
<keyword id="KW-0028">Amino-acid biosynthesis</keyword>
<keyword id="KW-0057">Aromatic amino acid biosynthesis</keyword>
<keyword id="KW-0067">ATP-binding</keyword>
<keyword id="KW-0963">Cytoplasm</keyword>
<keyword id="KW-0418">Kinase</keyword>
<keyword id="KW-0460">Magnesium</keyword>
<keyword id="KW-0479">Metal-binding</keyword>
<keyword id="KW-0547">Nucleotide-binding</keyword>
<keyword id="KW-1185">Reference proteome</keyword>
<keyword id="KW-0808">Transferase</keyword>
<feature type="chain" id="PRO_0000237873" description="Shikimate kinase">
    <location>
        <begin position="1"/>
        <end position="196"/>
    </location>
</feature>
<feature type="binding site" evidence="1">
    <location>
        <begin position="21"/>
        <end position="26"/>
    </location>
    <ligand>
        <name>ATP</name>
        <dbReference type="ChEBI" id="CHEBI:30616"/>
    </ligand>
</feature>
<feature type="binding site" evidence="1">
    <location>
        <position position="25"/>
    </location>
    <ligand>
        <name>Mg(2+)</name>
        <dbReference type="ChEBI" id="CHEBI:18420"/>
    </ligand>
</feature>
<feature type="binding site" evidence="1">
    <location>
        <position position="43"/>
    </location>
    <ligand>
        <name>substrate</name>
    </ligand>
</feature>
<feature type="binding site" evidence="1">
    <location>
        <position position="67"/>
    </location>
    <ligand>
        <name>substrate</name>
    </ligand>
</feature>
<feature type="binding site" evidence="1">
    <location>
        <position position="89"/>
    </location>
    <ligand>
        <name>substrate</name>
    </ligand>
</feature>
<feature type="binding site" evidence="1">
    <location>
        <position position="126"/>
    </location>
    <ligand>
        <name>ATP</name>
        <dbReference type="ChEBI" id="CHEBI:30616"/>
    </ligand>
</feature>
<feature type="binding site" evidence="1">
    <location>
        <position position="145"/>
    </location>
    <ligand>
        <name>substrate</name>
    </ligand>
</feature>
<feature type="binding site" evidence="1">
    <location>
        <position position="161"/>
    </location>
    <ligand>
        <name>ATP</name>
        <dbReference type="ChEBI" id="CHEBI:30616"/>
    </ligand>
</feature>
<accession>Q9RW93</accession>
<name>AROK_DEIRA</name>
<gene>
    <name evidence="1" type="primary">aroK</name>
    <name type="ordered locus">DR_0776</name>
</gene>
<proteinExistence type="inferred from homology"/>